<protein>
    <recommendedName>
        <fullName evidence="6">Bax inhibitor 1</fullName>
    </recommendedName>
</protein>
<keyword id="KW-0053">Apoptosis</keyword>
<keyword id="KW-0072">Autophagy</keyword>
<keyword id="KW-0256">Endoplasmic reticulum</keyword>
<keyword id="KW-0472">Membrane</keyword>
<keyword id="KW-1185">Reference proteome</keyword>
<keyword id="KW-0812">Transmembrane</keyword>
<keyword id="KW-1133">Transmembrane helix</keyword>
<keyword id="KW-0834">Unfolded protein response</keyword>
<comment type="function">
    <text evidence="1 3 4">Suppressor of apoptosis (By similarity). Modulates unfolded protein response signaling (PubMed:19328063). Negatively regulates autophagy and autophagosome formation, especially during periods of nutrient deprivation, and reduces cell survival during starvation (PubMed:21926971).</text>
</comment>
<comment type="subcellular location">
    <subcellularLocation>
        <location evidence="1">Endoplasmic reticulum membrane</location>
        <topology evidence="1">Multi-pass membrane protein</topology>
    </subcellularLocation>
</comment>
<comment type="disruption phenotype">
    <text evidence="4">RNAi-mediated knockdown induces autophagy in larvae under basal and fasting conditions with larvae showing an increased number of autophagosomes. Decreased larval survival following treatment with tunicamycin. Impaired pupal salivary gland degradation with pupae undergoing autophagy prematurely by six hours after puparium formation. Increased adult survival during nutrient starvation.</text>
</comment>
<comment type="similarity">
    <text evidence="5">Belongs to the BI1 family.</text>
</comment>
<feature type="chain" id="PRO_0000179084" description="Bax inhibitor 1">
    <location>
        <begin position="1"/>
        <end position="245"/>
    </location>
</feature>
<feature type="topological domain" description="Cytoplasmic" evidence="2">
    <location>
        <begin position="1"/>
        <end position="30"/>
    </location>
</feature>
<feature type="transmembrane region" description="Helical" evidence="2">
    <location>
        <begin position="31"/>
        <end position="51"/>
    </location>
</feature>
<feature type="topological domain" description="Lumenal" evidence="2">
    <location>
        <begin position="52"/>
        <end position="55"/>
    </location>
</feature>
<feature type="transmembrane region" description="Helical" evidence="2">
    <location>
        <begin position="56"/>
        <end position="76"/>
    </location>
</feature>
<feature type="topological domain" description="Cytoplasmic" evidence="2">
    <location>
        <begin position="77"/>
        <end position="88"/>
    </location>
</feature>
<feature type="transmembrane region" description="Helical" evidence="2">
    <location>
        <begin position="89"/>
        <end position="109"/>
    </location>
</feature>
<feature type="topological domain" description="Lumenal" evidence="2">
    <location>
        <begin position="110"/>
        <end position="115"/>
    </location>
</feature>
<feature type="transmembrane region" description="Helical" evidence="2">
    <location>
        <begin position="116"/>
        <end position="136"/>
    </location>
</feature>
<feature type="topological domain" description="Cytoplasmic" evidence="2">
    <location>
        <begin position="137"/>
        <end position="142"/>
    </location>
</feature>
<feature type="transmembrane region" description="Helical" evidence="2">
    <location>
        <begin position="143"/>
        <end position="163"/>
    </location>
</feature>
<feature type="topological domain" description="Lumenal" evidence="2">
    <location>
        <begin position="164"/>
        <end position="169"/>
    </location>
</feature>
<feature type="transmembrane region" description="Helical" evidence="2">
    <location>
        <begin position="170"/>
        <end position="190"/>
    </location>
</feature>
<feature type="topological domain" description="Cytoplasmic" evidence="2">
    <location>
        <begin position="191"/>
        <end position="245"/>
    </location>
</feature>
<reference key="1">
    <citation type="journal article" date="2000" name="Science">
        <title>The genome sequence of Drosophila melanogaster.</title>
        <authorList>
            <person name="Adams M.D."/>
            <person name="Celniker S.E."/>
            <person name="Holt R.A."/>
            <person name="Evans C.A."/>
            <person name="Gocayne J.D."/>
            <person name="Amanatides P.G."/>
            <person name="Scherer S.E."/>
            <person name="Li P.W."/>
            <person name="Hoskins R.A."/>
            <person name="Galle R.F."/>
            <person name="George R.A."/>
            <person name="Lewis S.E."/>
            <person name="Richards S."/>
            <person name="Ashburner M."/>
            <person name="Henderson S.N."/>
            <person name="Sutton G.G."/>
            <person name="Wortman J.R."/>
            <person name="Yandell M.D."/>
            <person name="Zhang Q."/>
            <person name="Chen L.X."/>
            <person name="Brandon R.C."/>
            <person name="Rogers Y.-H.C."/>
            <person name="Blazej R.G."/>
            <person name="Champe M."/>
            <person name="Pfeiffer B.D."/>
            <person name="Wan K.H."/>
            <person name="Doyle C."/>
            <person name="Baxter E.G."/>
            <person name="Helt G."/>
            <person name="Nelson C.R."/>
            <person name="Miklos G.L.G."/>
            <person name="Abril J.F."/>
            <person name="Agbayani A."/>
            <person name="An H.-J."/>
            <person name="Andrews-Pfannkoch C."/>
            <person name="Baldwin D."/>
            <person name="Ballew R.M."/>
            <person name="Basu A."/>
            <person name="Baxendale J."/>
            <person name="Bayraktaroglu L."/>
            <person name="Beasley E.M."/>
            <person name="Beeson K.Y."/>
            <person name="Benos P.V."/>
            <person name="Berman B.P."/>
            <person name="Bhandari D."/>
            <person name="Bolshakov S."/>
            <person name="Borkova D."/>
            <person name="Botchan M.R."/>
            <person name="Bouck J."/>
            <person name="Brokstein P."/>
            <person name="Brottier P."/>
            <person name="Burtis K.C."/>
            <person name="Busam D.A."/>
            <person name="Butler H."/>
            <person name="Cadieu E."/>
            <person name="Center A."/>
            <person name="Chandra I."/>
            <person name="Cherry J.M."/>
            <person name="Cawley S."/>
            <person name="Dahlke C."/>
            <person name="Davenport L.B."/>
            <person name="Davies P."/>
            <person name="de Pablos B."/>
            <person name="Delcher A."/>
            <person name="Deng Z."/>
            <person name="Mays A.D."/>
            <person name="Dew I."/>
            <person name="Dietz S.M."/>
            <person name="Dodson K."/>
            <person name="Doup L.E."/>
            <person name="Downes M."/>
            <person name="Dugan-Rocha S."/>
            <person name="Dunkov B.C."/>
            <person name="Dunn P."/>
            <person name="Durbin K.J."/>
            <person name="Evangelista C.C."/>
            <person name="Ferraz C."/>
            <person name="Ferriera S."/>
            <person name="Fleischmann W."/>
            <person name="Fosler C."/>
            <person name="Gabrielian A.E."/>
            <person name="Garg N.S."/>
            <person name="Gelbart W.M."/>
            <person name="Glasser K."/>
            <person name="Glodek A."/>
            <person name="Gong F."/>
            <person name="Gorrell J.H."/>
            <person name="Gu Z."/>
            <person name="Guan P."/>
            <person name="Harris M."/>
            <person name="Harris N.L."/>
            <person name="Harvey D.A."/>
            <person name="Heiman T.J."/>
            <person name="Hernandez J.R."/>
            <person name="Houck J."/>
            <person name="Hostin D."/>
            <person name="Houston K.A."/>
            <person name="Howland T.J."/>
            <person name="Wei M.-H."/>
            <person name="Ibegwam C."/>
            <person name="Jalali M."/>
            <person name="Kalush F."/>
            <person name="Karpen G.H."/>
            <person name="Ke Z."/>
            <person name="Kennison J.A."/>
            <person name="Ketchum K.A."/>
            <person name="Kimmel B.E."/>
            <person name="Kodira C.D."/>
            <person name="Kraft C.L."/>
            <person name="Kravitz S."/>
            <person name="Kulp D."/>
            <person name="Lai Z."/>
            <person name="Lasko P."/>
            <person name="Lei Y."/>
            <person name="Levitsky A.A."/>
            <person name="Li J.H."/>
            <person name="Li Z."/>
            <person name="Liang Y."/>
            <person name="Lin X."/>
            <person name="Liu X."/>
            <person name="Mattei B."/>
            <person name="McIntosh T.C."/>
            <person name="McLeod M.P."/>
            <person name="McPherson D."/>
            <person name="Merkulov G."/>
            <person name="Milshina N.V."/>
            <person name="Mobarry C."/>
            <person name="Morris J."/>
            <person name="Moshrefi A."/>
            <person name="Mount S.M."/>
            <person name="Moy M."/>
            <person name="Murphy B."/>
            <person name="Murphy L."/>
            <person name="Muzny D.M."/>
            <person name="Nelson D.L."/>
            <person name="Nelson D.R."/>
            <person name="Nelson K.A."/>
            <person name="Nixon K."/>
            <person name="Nusskern D.R."/>
            <person name="Pacleb J.M."/>
            <person name="Palazzolo M."/>
            <person name="Pittman G.S."/>
            <person name="Pan S."/>
            <person name="Pollard J."/>
            <person name="Puri V."/>
            <person name="Reese M.G."/>
            <person name="Reinert K."/>
            <person name="Remington K."/>
            <person name="Saunders R.D.C."/>
            <person name="Scheeler F."/>
            <person name="Shen H."/>
            <person name="Shue B.C."/>
            <person name="Siden-Kiamos I."/>
            <person name="Simpson M."/>
            <person name="Skupski M.P."/>
            <person name="Smith T.J."/>
            <person name="Spier E."/>
            <person name="Spradling A.C."/>
            <person name="Stapleton M."/>
            <person name="Strong R."/>
            <person name="Sun E."/>
            <person name="Svirskas R."/>
            <person name="Tector C."/>
            <person name="Turner R."/>
            <person name="Venter E."/>
            <person name="Wang A.H."/>
            <person name="Wang X."/>
            <person name="Wang Z.-Y."/>
            <person name="Wassarman D.A."/>
            <person name="Weinstock G.M."/>
            <person name="Weissenbach J."/>
            <person name="Williams S.M."/>
            <person name="Woodage T."/>
            <person name="Worley K.C."/>
            <person name="Wu D."/>
            <person name="Yang S."/>
            <person name="Yao Q.A."/>
            <person name="Ye J."/>
            <person name="Yeh R.-F."/>
            <person name="Zaveri J.S."/>
            <person name="Zhan M."/>
            <person name="Zhang G."/>
            <person name="Zhao Q."/>
            <person name="Zheng L."/>
            <person name="Zheng X.H."/>
            <person name="Zhong F.N."/>
            <person name="Zhong W."/>
            <person name="Zhou X."/>
            <person name="Zhu S.C."/>
            <person name="Zhu X."/>
            <person name="Smith H.O."/>
            <person name="Gibbs R.A."/>
            <person name="Myers E.W."/>
            <person name="Rubin G.M."/>
            <person name="Venter J.C."/>
        </authorList>
    </citation>
    <scope>NUCLEOTIDE SEQUENCE [LARGE SCALE GENOMIC DNA]</scope>
    <source>
        <strain>Berkeley</strain>
    </source>
</reference>
<reference key="2">
    <citation type="journal article" date="2002" name="Genome Biol.">
        <title>Annotation of the Drosophila melanogaster euchromatic genome: a systematic review.</title>
        <authorList>
            <person name="Misra S."/>
            <person name="Crosby M.A."/>
            <person name="Mungall C.J."/>
            <person name="Matthews B.B."/>
            <person name="Campbell K.S."/>
            <person name="Hradecky P."/>
            <person name="Huang Y."/>
            <person name="Kaminker J.S."/>
            <person name="Millburn G.H."/>
            <person name="Prochnik S.E."/>
            <person name="Smith C.D."/>
            <person name="Tupy J.L."/>
            <person name="Whitfield E.J."/>
            <person name="Bayraktaroglu L."/>
            <person name="Berman B.P."/>
            <person name="Bettencourt B.R."/>
            <person name="Celniker S.E."/>
            <person name="de Grey A.D.N.J."/>
            <person name="Drysdale R.A."/>
            <person name="Harris N.L."/>
            <person name="Richter J."/>
            <person name="Russo S."/>
            <person name="Schroeder A.J."/>
            <person name="Shu S.Q."/>
            <person name="Stapleton M."/>
            <person name="Yamada C."/>
            <person name="Ashburner M."/>
            <person name="Gelbart W.M."/>
            <person name="Rubin G.M."/>
            <person name="Lewis S.E."/>
        </authorList>
    </citation>
    <scope>GENOME REANNOTATION</scope>
    <source>
        <strain>Berkeley</strain>
    </source>
</reference>
<reference key="3">
    <citation type="journal article" date="2002" name="Genome Biol.">
        <title>A Drosophila full-length cDNA resource.</title>
        <authorList>
            <person name="Stapleton M."/>
            <person name="Carlson J.W."/>
            <person name="Brokstein P."/>
            <person name="Yu C."/>
            <person name="Champe M."/>
            <person name="George R.A."/>
            <person name="Guarin H."/>
            <person name="Kronmiller B."/>
            <person name="Pacleb J.M."/>
            <person name="Park S."/>
            <person name="Wan K.H."/>
            <person name="Rubin G.M."/>
            <person name="Celniker S.E."/>
        </authorList>
    </citation>
    <scope>NUCLEOTIDE SEQUENCE [LARGE SCALE MRNA]</scope>
    <source>
        <strain>Berkeley</strain>
        <tissue>Head</tissue>
    </source>
</reference>
<reference key="4">
    <citation type="journal article" date="2009" name="Mol. Cell">
        <title>BAX inhibitor-1 is a negative regulator of the ER stress sensor IRE1alpha.</title>
        <authorList>
            <person name="Lisbona F."/>
            <person name="Rojas-Rivera D."/>
            <person name="Thielen P."/>
            <person name="Zamorano S."/>
            <person name="Todd D."/>
            <person name="Martinon F."/>
            <person name="Glavic A."/>
            <person name="Kress C."/>
            <person name="Lin J.H."/>
            <person name="Walter P."/>
            <person name="Reed J.C."/>
            <person name="Glimcher L.H."/>
            <person name="Hetz C."/>
        </authorList>
    </citation>
    <scope>FUNCTION</scope>
</reference>
<reference key="5">
    <citation type="journal article" date="2011" name="EMBO J.">
        <title>BAX inhibitor-1 regulates autophagy by controlling the IRE1alpha branch of the unfolded protein response.</title>
        <authorList>
            <person name="Castillo K."/>
            <person name="Rojas-Rivera D."/>
            <person name="Lisbona F."/>
            <person name="Caballero B."/>
            <person name="Nassif M."/>
            <person name="Court F.A."/>
            <person name="Schuck S."/>
            <person name="Ibar C."/>
            <person name="Walter P."/>
            <person name="Sierralta J."/>
            <person name="Glavic A."/>
            <person name="Hetz C."/>
        </authorList>
    </citation>
    <scope>FUNCTION</scope>
    <scope>DISRUPTION PHENOTYPE</scope>
</reference>
<evidence type="ECO:0000250" key="1">
    <source>
        <dbReference type="UniProtKB" id="P55061"/>
    </source>
</evidence>
<evidence type="ECO:0000255" key="2"/>
<evidence type="ECO:0000269" key="3">
    <source>
    </source>
</evidence>
<evidence type="ECO:0000269" key="4">
    <source>
    </source>
</evidence>
<evidence type="ECO:0000305" key="5"/>
<evidence type="ECO:0000312" key="6">
    <source>
        <dbReference type="FlyBase" id="FBgn0035871"/>
    </source>
</evidence>
<organism>
    <name type="scientific">Drosophila melanogaster</name>
    <name type="common">Fruit fly</name>
    <dbReference type="NCBI Taxonomy" id="7227"/>
    <lineage>
        <taxon>Eukaryota</taxon>
        <taxon>Metazoa</taxon>
        <taxon>Ecdysozoa</taxon>
        <taxon>Arthropoda</taxon>
        <taxon>Hexapoda</taxon>
        <taxon>Insecta</taxon>
        <taxon>Pterygota</taxon>
        <taxon>Neoptera</taxon>
        <taxon>Endopterygota</taxon>
        <taxon>Diptera</taxon>
        <taxon>Brachycera</taxon>
        <taxon>Muscomorpha</taxon>
        <taxon>Ephydroidea</taxon>
        <taxon>Drosophilidae</taxon>
        <taxon>Drosophila</taxon>
        <taxon>Sophophora</taxon>
    </lineage>
</organism>
<proteinExistence type="evidence at transcript level"/>
<name>BI1_DROME</name>
<gene>
    <name evidence="6" type="primary">BI-1</name>
    <name evidence="6" type="ORF">CG7188</name>
</gene>
<dbReference type="EMBL" id="AE014296">
    <property type="protein sequence ID" value="AAF50446.1"/>
    <property type="molecule type" value="Genomic_DNA"/>
</dbReference>
<dbReference type="EMBL" id="AY058377">
    <property type="protein sequence ID" value="AAL13606.1"/>
    <property type="molecule type" value="mRNA"/>
</dbReference>
<dbReference type="RefSeq" id="NP_648205.1">
    <property type="nucleotide sequence ID" value="NM_139948.4"/>
</dbReference>
<dbReference type="SMR" id="Q9VSH3"/>
<dbReference type="BioGRID" id="64354">
    <property type="interactions" value="9"/>
</dbReference>
<dbReference type="DIP" id="DIP-18925N"/>
<dbReference type="FunCoup" id="Q9VSH3">
    <property type="interactions" value="158"/>
</dbReference>
<dbReference type="IntAct" id="Q9VSH3">
    <property type="interactions" value="4"/>
</dbReference>
<dbReference type="STRING" id="7227.FBpp0076434"/>
<dbReference type="PaxDb" id="7227-FBpp0076434"/>
<dbReference type="DNASU" id="38936"/>
<dbReference type="EnsemblMetazoa" id="FBtr0076711">
    <property type="protein sequence ID" value="FBpp0076434"/>
    <property type="gene ID" value="FBgn0035871"/>
</dbReference>
<dbReference type="GeneID" id="38936"/>
<dbReference type="KEGG" id="dme:Dmel_CG7188"/>
<dbReference type="UCSC" id="CG7188-RA">
    <property type="organism name" value="d. melanogaster"/>
</dbReference>
<dbReference type="AGR" id="FB:FBgn0035871"/>
<dbReference type="CTD" id="38936"/>
<dbReference type="FlyBase" id="FBgn0035871">
    <property type="gene designation" value="BI-1"/>
</dbReference>
<dbReference type="VEuPathDB" id="VectorBase:FBgn0035871"/>
<dbReference type="eggNOG" id="KOG1629">
    <property type="taxonomic scope" value="Eukaryota"/>
</dbReference>
<dbReference type="GeneTree" id="ENSGT01050000244940"/>
<dbReference type="HOGENOM" id="CLU_061277_0_0_1"/>
<dbReference type="InParanoid" id="Q9VSH3"/>
<dbReference type="OMA" id="SRDFIMH"/>
<dbReference type="OrthoDB" id="1277691at2759"/>
<dbReference type="PhylomeDB" id="Q9VSH3"/>
<dbReference type="BioGRID-ORCS" id="38936">
    <property type="hits" value="0 hits in 1 CRISPR screen"/>
</dbReference>
<dbReference type="GenomeRNAi" id="38936"/>
<dbReference type="PRO" id="PR:Q9VSH3"/>
<dbReference type="Proteomes" id="UP000000803">
    <property type="component" value="Chromosome 3L"/>
</dbReference>
<dbReference type="Bgee" id="FBgn0035871">
    <property type="expression patterns" value="Expressed in early-mid elongation-stage spermatid (Drosophila) in testis and 226 other cell types or tissues"/>
</dbReference>
<dbReference type="ExpressionAtlas" id="Q9VSH3">
    <property type="expression patterns" value="baseline and differential"/>
</dbReference>
<dbReference type="GO" id="GO:0005789">
    <property type="term" value="C:endoplasmic reticulum membrane"/>
    <property type="evidence" value="ECO:0000250"/>
    <property type="project" value="FlyBase"/>
</dbReference>
<dbReference type="GO" id="GO:0016020">
    <property type="term" value="C:membrane"/>
    <property type="evidence" value="ECO:0000250"/>
    <property type="project" value="FlyBase"/>
</dbReference>
<dbReference type="GO" id="GO:0031090">
    <property type="term" value="C:organelle membrane"/>
    <property type="evidence" value="ECO:0000255"/>
    <property type="project" value="FlyBase"/>
</dbReference>
<dbReference type="GO" id="GO:0005262">
    <property type="term" value="F:calcium channel activity"/>
    <property type="evidence" value="ECO:0000250"/>
    <property type="project" value="FlyBase"/>
</dbReference>
<dbReference type="GO" id="GO:0060698">
    <property type="term" value="F:endoribonuclease inhibitor activity"/>
    <property type="evidence" value="ECO:0000250"/>
    <property type="project" value="ParkinsonsUK-UCL"/>
</dbReference>
<dbReference type="GO" id="GO:0006915">
    <property type="term" value="P:apoptotic process"/>
    <property type="evidence" value="ECO:0007669"/>
    <property type="project" value="UniProtKB-KW"/>
</dbReference>
<dbReference type="GO" id="GO:0006914">
    <property type="term" value="P:autophagy"/>
    <property type="evidence" value="ECO:0007669"/>
    <property type="project" value="UniProtKB-KW"/>
</dbReference>
<dbReference type="GO" id="GO:0006816">
    <property type="term" value="P:calcium ion transport"/>
    <property type="evidence" value="ECO:0000250"/>
    <property type="project" value="FlyBase"/>
</dbReference>
<dbReference type="GO" id="GO:0009267">
    <property type="term" value="P:cellular response to starvation"/>
    <property type="evidence" value="ECO:0000315"/>
    <property type="project" value="FlyBase"/>
</dbReference>
<dbReference type="GO" id="GO:0034620">
    <property type="term" value="P:cellular response to unfolded protein"/>
    <property type="evidence" value="ECO:0000314"/>
    <property type="project" value="ParkinsonsUK-UCL"/>
</dbReference>
<dbReference type="GO" id="GO:0032469">
    <property type="term" value="P:endoplasmic reticulum calcium ion homeostasis"/>
    <property type="evidence" value="ECO:0000315"/>
    <property type="project" value="FlyBase"/>
</dbReference>
<dbReference type="GO" id="GO:0043066">
    <property type="term" value="P:negative regulation of apoptotic process"/>
    <property type="evidence" value="ECO:0000316"/>
    <property type="project" value="FlyBase"/>
</dbReference>
<dbReference type="GO" id="GO:2001234">
    <property type="term" value="P:negative regulation of apoptotic signaling pathway"/>
    <property type="evidence" value="ECO:0000314"/>
    <property type="project" value="FlyBase"/>
</dbReference>
<dbReference type="GO" id="GO:0010507">
    <property type="term" value="P:negative regulation of autophagy"/>
    <property type="evidence" value="ECO:0000315"/>
    <property type="project" value="FlyBase"/>
</dbReference>
<dbReference type="GO" id="GO:1900102">
    <property type="term" value="P:negative regulation of endoplasmic reticulum unfolded protein response"/>
    <property type="evidence" value="ECO:0000250"/>
    <property type="project" value="FlyBase"/>
</dbReference>
<dbReference type="GO" id="GO:0033119">
    <property type="term" value="P:negative regulation of RNA splicing"/>
    <property type="evidence" value="ECO:0000314"/>
    <property type="project" value="ParkinsonsUK-UCL"/>
</dbReference>
<dbReference type="CDD" id="cd10430">
    <property type="entry name" value="BI-1"/>
    <property type="match status" value="1"/>
</dbReference>
<dbReference type="InterPro" id="IPR006213">
    <property type="entry name" value="Bax_inhbtr1_CS"/>
</dbReference>
<dbReference type="InterPro" id="IPR006214">
    <property type="entry name" value="Bax_inhibitor_1-related"/>
</dbReference>
<dbReference type="PANTHER" id="PTHR23291:SF32">
    <property type="entry name" value="BAX INHIBITOR 1"/>
    <property type="match status" value="1"/>
</dbReference>
<dbReference type="PANTHER" id="PTHR23291">
    <property type="entry name" value="BAX INHIBITOR-RELATED"/>
    <property type="match status" value="1"/>
</dbReference>
<dbReference type="Pfam" id="PF01027">
    <property type="entry name" value="Bax1-I"/>
    <property type="match status" value="1"/>
</dbReference>
<dbReference type="PROSITE" id="PS01243">
    <property type="entry name" value="BI1"/>
    <property type="match status" value="1"/>
</dbReference>
<accession>Q9VSH3</accession>
<sequence length="245" mass="27574">MADTANYINDRFQTFMNGLGDRYEPYVREHLSKVYMVLGSTAAATAMGAMLQMRDFLDLGVLAAVATLVLVLGLHFYKDDGKNYYTRLGMLYAFGFCSGQTLGPLLGYICSINPAIILSALTGTFVTFISLSLSALLAEQGKYLYLGGMLVSVINTMALLSLFNMVFKSYFVQVTQLYVGVFVMAAFIVYDTQNIVEKCRNGNRDVVQHALDLFFDVLSMFRRLLIILTQKEERKQNERRQNKTK</sequence>